<dbReference type="EC" id="6.3.5.7" evidence="1"/>
<dbReference type="EMBL" id="AP010904">
    <property type="protein sequence ID" value="BAH75224.1"/>
    <property type="molecule type" value="Genomic_DNA"/>
</dbReference>
<dbReference type="RefSeq" id="WP_015860423.1">
    <property type="nucleotide sequence ID" value="NC_012796.1"/>
</dbReference>
<dbReference type="SMR" id="C4XQ59"/>
<dbReference type="STRING" id="573370.DMR_17330"/>
<dbReference type="KEGG" id="dma:DMR_17330"/>
<dbReference type="eggNOG" id="COG0154">
    <property type="taxonomic scope" value="Bacteria"/>
</dbReference>
<dbReference type="HOGENOM" id="CLU_009600_0_3_7"/>
<dbReference type="OrthoDB" id="9811471at2"/>
<dbReference type="Proteomes" id="UP000009071">
    <property type="component" value="Chromosome"/>
</dbReference>
<dbReference type="GO" id="GO:0030956">
    <property type="term" value="C:glutamyl-tRNA(Gln) amidotransferase complex"/>
    <property type="evidence" value="ECO:0007669"/>
    <property type="project" value="InterPro"/>
</dbReference>
<dbReference type="GO" id="GO:0005524">
    <property type="term" value="F:ATP binding"/>
    <property type="evidence" value="ECO:0007669"/>
    <property type="project" value="UniProtKB-KW"/>
</dbReference>
<dbReference type="GO" id="GO:0050567">
    <property type="term" value="F:glutaminyl-tRNA synthase (glutamine-hydrolyzing) activity"/>
    <property type="evidence" value="ECO:0007669"/>
    <property type="project" value="UniProtKB-UniRule"/>
</dbReference>
<dbReference type="GO" id="GO:0006412">
    <property type="term" value="P:translation"/>
    <property type="evidence" value="ECO:0007669"/>
    <property type="project" value="UniProtKB-UniRule"/>
</dbReference>
<dbReference type="Gene3D" id="3.90.1300.10">
    <property type="entry name" value="Amidase signature (AS) domain"/>
    <property type="match status" value="1"/>
</dbReference>
<dbReference type="HAMAP" id="MF_00120">
    <property type="entry name" value="GatA"/>
    <property type="match status" value="1"/>
</dbReference>
<dbReference type="InterPro" id="IPR000120">
    <property type="entry name" value="Amidase"/>
</dbReference>
<dbReference type="InterPro" id="IPR020556">
    <property type="entry name" value="Amidase_CS"/>
</dbReference>
<dbReference type="InterPro" id="IPR023631">
    <property type="entry name" value="Amidase_dom"/>
</dbReference>
<dbReference type="InterPro" id="IPR036928">
    <property type="entry name" value="AS_sf"/>
</dbReference>
<dbReference type="InterPro" id="IPR004412">
    <property type="entry name" value="GatA"/>
</dbReference>
<dbReference type="NCBIfam" id="TIGR00132">
    <property type="entry name" value="gatA"/>
    <property type="match status" value="1"/>
</dbReference>
<dbReference type="PANTHER" id="PTHR11895:SF151">
    <property type="entry name" value="GLUTAMYL-TRNA(GLN) AMIDOTRANSFERASE SUBUNIT A"/>
    <property type="match status" value="1"/>
</dbReference>
<dbReference type="PANTHER" id="PTHR11895">
    <property type="entry name" value="TRANSAMIDASE"/>
    <property type="match status" value="1"/>
</dbReference>
<dbReference type="Pfam" id="PF01425">
    <property type="entry name" value="Amidase"/>
    <property type="match status" value="1"/>
</dbReference>
<dbReference type="SUPFAM" id="SSF75304">
    <property type="entry name" value="Amidase signature (AS) enzymes"/>
    <property type="match status" value="1"/>
</dbReference>
<dbReference type="PROSITE" id="PS00571">
    <property type="entry name" value="AMIDASES"/>
    <property type="match status" value="1"/>
</dbReference>
<protein>
    <recommendedName>
        <fullName evidence="1">Glutamyl-tRNA(Gln) amidotransferase subunit A</fullName>
        <shortName evidence="1">Glu-ADT subunit A</shortName>
        <ecNumber evidence="1">6.3.5.7</ecNumber>
    </recommendedName>
</protein>
<proteinExistence type="inferred from homology"/>
<name>GATA_SOLM1</name>
<evidence type="ECO:0000255" key="1">
    <source>
        <dbReference type="HAMAP-Rule" id="MF_00120"/>
    </source>
</evidence>
<sequence>MSDITTLSLTALRDKLARKELSAVEAASACLARIEATEPKIHALLHCDAEAALAAAKALDAAGPNPDQRLWGVPVLVKDAICVKDAPTTCGSKILENFTPFYDASCIEKMRAAGAVILGKANMDEFAMGSSTENSAYKVTANPWDLGKVPGGSSGGSAAAVAAGQCFAALGTDTGGSIRQPAAFCGTVGIKPTYGRVSRYGLVAYGSSLDQIGPLTRTADDAAAVLGVIAGPDPKDSTCAPRDVPDFEAALAGAADLAGLTIGLPDEYWGEGVDAEVRDACRAAVDTAKSLGANVVPVSLPHTPYAVATYYIVAMAEASSNLARFDGVRYGYRAPEAQSLEELYELSRSKGFGPEVQRRIVIGAYVLSAGYYDAYYRKAAQVRRLIRQDFLNAFEKCDVICGPTSPFAAFTIGQMSDDPLQMYLSDIFTISLNLAGLPGLSMPVGLGTTSAMPIGMQLFGRAFDEATILRTAKVLGNALPPLPQPAAV</sequence>
<feature type="chain" id="PRO_1000203033" description="Glutamyl-tRNA(Gln) amidotransferase subunit A">
    <location>
        <begin position="1"/>
        <end position="488"/>
    </location>
</feature>
<feature type="active site" description="Charge relay system" evidence="1">
    <location>
        <position position="78"/>
    </location>
</feature>
<feature type="active site" description="Charge relay system" evidence="1">
    <location>
        <position position="153"/>
    </location>
</feature>
<feature type="active site" description="Acyl-ester intermediate" evidence="1">
    <location>
        <position position="177"/>
    </location>
</feature>
<comment type="function">
    <text evidence="1">Allows the formation of correctly charged Gln-tRNA(Gln) through the transamidation of misacylated Glu-tRNA(Gln) in organisms which lack glutaminyl-tRNA synthetase. The reaction takes place in the presence of glutamine and ATP through an activated gamma-phospho-Glu-tRNA(Gln).</text>
</comment>
<comment type="catalytic activity">
    <reaction evidence="1">
        <text>L-glutamyl-tRNA(Gln) + L-glutamine + ATP + H2O = L-glutaminyl-tRNA(Gln) + L-glutamate + ADP + phosphate + H(+)</text>
        <dbReference type="Rhea" id="RHEA:17521"/>
        <dbReference type="Rhea" id="RHEA-COMP:9681"/>
        <dbReference type="Rhea" id="RHEA-COMP:9684"/>
        <dbReference type="ChEBI" id="CHEBI:15377"/>
        <dbReference type="ChEBI" id="CHEBI:15378"/>
        <dbReference type="ChEBI" id="CHEBI:29985"/>
        <dbReference type="ChEBI" id="CHEBI:30616"/>
        <dbReference type="ChEBI" id="CHEBI:43474"/>
        <dbReference type="ChEBI" id="CHEBI:58359"/>
        <dbReference type="ChEBI" id="CHEBI:78520"/>
        <dbReference type="ChEBI" id="CHEBI:78521"/>
        <dbReference type="ChEBI" id="CHEBI:456216"/>
        <dbReference type="EC" id="6.3.5.7"/>
    </reaction>
</comment>
<comment type="subunit">
    <text evidence="1">Heterotrimer of A, B and C subunits.</text>
</comment>
<comment type="similarity">
    <text evidence="1">Belongs to the amidase family. GatA subfamily.</text>
</comment>
<reference key="1">
    <citation type="journal article" date="2009" name="Genome Res.">
        <title>Whole genome sequence of Desulfovibrio magneticus strain RS-1 revealed common gene clusters in magnetotactic bacteria.</title>
        <authorList>
            <person name="Nakazawa H."/>
            <person name="Arakaki A."/>
            <person name="Narita-Yamada S."/>
            <person name="Yashiro I."/>
            <person name="Jinno K."/>
            <person name="Aoki N."/>
            <person name="Tsuruyama A."/>
            <person name="Okamura Y."/>
            <person name="Tanikawa S."/>
            <person name="Fujita N."/>
            <person name="Takeyama H."/>
            <person name="Matsunaga T."/>
        </authorList>
    </citation>
    <scope>NUCLEOTIDE SEQUENCE [LARGE SCALE GENOMIC DNA]</scope>
    <source>
        <strain>ATCC 700980 / DSM 13731 / RS-1</strain>
    </source>
</reference>
<gene>
    <name evidence="1" type="primary">gatA</name>
    <name type="ordered locus">DMR_17330</name>
</gene>
<accession>C4XQ59</accession>
<organism>
    <name type="scientific">Solidesulfovibrio magneticus (strain ATCC 700980 / DSM 13731 / RS-1)</name>
    <name type="common">Desulfovibrio magneticus</name>
    <dbReference type="NCBI Taxonomy" id="573370"/>
    <lineage>
        <taxon>Bacteria</taxon>
        <taxon>Pseudomonadati</taxon>
        <taxon>Thermodesulfobacteriota</taxon>
        <taxon>Desulfovibrionia</taxon>
        <taxon>Desulfovibrionales</taxon>
        <taxon>Desulfovibrionaceae</taxon>
        <taxon>Solidesulfovibrio</taxon>
    </lineage>
</organism>
<keyword id="KW-0067">ATP-binding</keyword>
<keyword id="KW-0436">Ligase</keyword>
<keyword id="KW-0547">Nucleotide-binding</keyword>
<keyword id="KW-0648">Protein biosynthesis</keyword>